<proteinExistence type="evidence at protein level"/>
<sequence length="1146" mass="126691">MDSSSTTPLADYFWIAGIETIAYDDPLPSGSQVAASIAEDGEQQPEENGVNANGTGAPRHHARHSRQNSANRLSNSRFSIHTLDEIDGNTQSNRSSVTIRPAHAQGNGLPNEGVGPAPGIGLLDGFDFDDALVKFAAERENFLDDLTFSAGAKLQARPPMVNPRAERIKAEDSDQSGRRSPLRNLERSIKGSIRRKMSFRDMNSSRRQPVTPRASTPGAGAIPRQGSIRTTRRLSNYNSVIPPPEPLNTDPNMHPLKRRFEPVLLDRYPAKDVPEETARRGKFPDYVPMFAFPNDIQIVSSDDRPRSTWHGFTMTSDDNSKIYGITIIIWTALTSDVAEELEKRCEQWRQRHMSNEERELAASLGVRLAAERANLSSLLARLPSVPSGSSARDALDDQISTVEEKISLMTEMLRPLRHGAASKIDGLTAGESGLWSPRAYGILGRDVTRMAFWKDWLRAVLVPMTDGGVLRIPPSSPKVGRWQPLERYVVNLCTEAFSPLGSKTQVELGVRELKLYARQDAVNEIPGSRTIDIYALFRCLSLDNIVALFEYAMSESRIIFLSSHTGMLHLACHALVNLLYPLKWASIFIPVLPARLLSALEAPCPYIVGVERRYERIELPEDDYVLVDLDKDTIDATSQPVRLPRQHRRKLHALLQVAAPAKLRYGVATGPPPYAMESFPYDAFSAENPSLYNDYASPSTLAQWVAQNSSTFGEPSPASEVKPPIFNAFLHSKVDPNKPDRPGTSKSTRTSPPSSVSPVSINFPPMPTTPVSRSDSGFALTSTLREKRSRNFDEKTRRSSSFGVDKHGPLHRPSIPFLNGNGHAPSMSISAISVDSQPYTHSSYGGGYAPSTYAQSTLAASTIMPNMLIQPVFNTETTVWVEGHCFNWEEGALSSSCSVCDDRAEGDGIYKCSGCSAFAHGRCLGCVSLACHQSFYPDRVRAAFVRCLASLLYTYRKHLGRPSKDQKNNGRMYAFDMDGFIKSLPYDQQEYANMMRETQAFNEFIHERETKPGTTASIRFFDEVIMAKKARGRPGIVSGLSRLSTIRSSHGASSNSSAFSPPSRLKIPTYLSDTSDHMWRTASVPVPSAKFPGDYRSIVTRIPARLDTSLMREPRVIQGVPRPEQRGTRGLVRKQVPSMLGTSPTN</sequence>
<keyword id="KW-0479">Metal-binding</keyword>
<keyword id="KW-1185">Reference proteome</keyword>
<keyword id="KW-0964">Secreted</keyword>
<keyword id="KW-0843">Virulence</keyword>
<keyword id="KW-0862">Zinc</keyword>
<keyword id="KW-0863">Zinc-finger</keyword>
<feature type="chain" id="PRO_0000462185" description="Elicitor of plant defense protein 1">
    <location>
        <begin position="1"/>
        <end position="1146"/>
    </location>
</feature>
<feature type="domain" description="uDENN" evidence="2">
    <location>
        <begin position="246"/>
        <end position="500"/>
    </location>
</feature>
<feature type="domain" description="cDENN" evidence="2">
    <location>
        <begin position="522"/>
        <end position="656"/>
    </location>
</feature>
<feature type="domain" description="dDENN" evidence="2">
    <location>
        <begin position="658"/>
        <end position="1016"/>
    </location>
</feature>
<feature type="zinc finger region" description="Phorbol-ester/DAG-type" evidence="1">
    <location>
        <begin position="883"/>
        <end position="931"/>
    </location>
</feature>
<feature type="region of interest" description="Disordered" evidence="3">
    <location>
        <begin position="25"/>
        <end position="75"/>
    </location>
</feature>
<feature type="region of interest" description="Disordered" evidence="3">
    <location>
        <begin position="156"/>
        <end position="226"/>
    </location>
</feature>
<feature type="region of interest" description="Disordered" evidence="3">
    <location>
        <begin position="730"/>
        <end position="806"/>
    </location>
</feature>
<feature type="region of interest" description="Disordered" evidence="3">
    <location>
        <begin position="1121"/>
        <end position="1146"/>
    </location>
</feature>
<feature type="compositionally biased region" description="Basic and acidic residues" evidence="3">
    <location>
        <begin position="164"/>
        <end position="177"/>
    </location>
</feature>
<feature type="compositionally biased region" description="Basic and acidic residues" evidence="3">
    <location>
        <begin position="732"/>
        <end position="743"/>
    </location>
</feature>
<feature type="compositionally biased region" description="Low complexity" evidence="3">
    <location>
        <begin position="744"/>
        <end position="760"/>
    </location>
</feature>
<feature type="compositionally biased region" description="Polar residues" evidence="3">
    <location>
        <begin position="769"/>
        <end position="783"/>
    </location>
</feature>
<feature type="compositionally biased region" description="Basic and acidic residues" evidence="3">
    <location>
        <begin position="784"/>
        <end position="797"/>
    </location>
</feature>
<evidence type="ECO:0000255" key="1">
    <source>
        <dbReference type="PROSITE-ProRule" id="PRU00226"/>
    </source>
</evidence>
<evidence type="ECO:0000255" key="2">
    <source>
        <dbReference type="PROSITE-ProRule" id="PRU00304"/>
    </source>
</evidence>
<evidence type="ECO:0000256" key="3">
    <source>
        <dbReference type="SAM" id="MobiDB-lite"/>
    </source>
</evidence>
<evidence type="ECO:0000269" key="4">
    <source>
    </source>
</evidence>
<evidence type="ECO:0000303" key="5">
    <source>
    </source>
</evidence>
<evidence type="ECO:0000305" key="6"/>
<dbReference type="EMBL" id="DS572697">
    <property type="protein sequence ID" value="EGY19946.1"/>
    <property type="molecule type" value="Genomic_DNA"/>
</dbReference>
<dbReference type="RefSeq" id="XP_009656286.1">
    <property type="nucleotide sequence ID" value="XM_009657991.1"/>
</dbReference>
<dbReference type="STRING" id="498257.G2WWH6"/>
<dbReference type="EnsemblFungi" id="EGY19946">
    <property type="protein sequence ID" value="EGY19946"/>
    <property type="gene ID" value="VDAG_01962"/>
</dbReference>
<dbReference type="GeneID" id="20703425"/>
<dbReference type="KEGG" id="vda:VDAG_01962"/>
<dbReference type="eggNOG" id="ENOG502QQUM">
    <property type="taxonomic scope" value="Eukaryota"/>
</dbReference>
<dbReference type="HOGENOM" id="CLU_001932_0_0_1"/>
<dbReference type="InParanoid" id="G2WWH6"/>
<dbReference type="OMA" id="RCEEWRK"/>
<dbReference type="OrthoDB" id="1331806at2759"/>
<dbReference type="Proteomes" id="UP000001611">
    <property type="component" value="Chromosome 7"/>
</dbReference>
<dbReference type="GO" id="GO:0031410">
    <property type="term" value="C:cytoplasmic vesicle"/>
    <property type="evidence" value="ECO:0007669"/>
    <property type="project" value="TreeGrafter"/>
</dbReference>
<dbReference type="GO" id="GO:0005576">
    <property type="term" value="C:extracellular region"/>
    <property type="evidence" value="ECO:0007669"/>
    <property type="project" value="UniProtKB-SubCell"/>
</dbReference>
<dbReference type="GO" id="GO:0043657">
    <property type="term" value="C:host cell"/>
    <property type="evidence" value="ECO:0007669"/>
    <property type="project" value="UniProtKB-SubCell"/>
</dbReference>
<dbReference type="GO" id="GO:0046872">
    <property type="term" value="F:metal ion binding"/>
    <property type="evidence" value="ECO:0007669"/>
    <property type="project" value="UniProtKB-KW"/>
</dbReference>
<dbReference type="GO" id="GO:0032483">
    <property type="term" value="P:regulation of Rab protein signal transduction"/>
    <property type="evidence" value="ECO:0007669"/>
    <property type="project" value="TreeGrafter"/>
</dbReference>
<dbReference type="CDD" id="cd00029">
    <property type="entry name" value="C1"/>
    <property type="match status" value="1"/>
</dbReference>
<dbReference type="Gene3D" id="3.40.50.11500">
    <property type="match status" value="1"/>
</dbReference>
<dbReference type="InterPro" id="IPR046349">
    <property type="entry name" value="C1-like_sf"/>
</dbReference>
<dbReference type="InterPro" id="IPR001194">
    <property type="entry name" value="cDENN_dom"/>
</dbReference>
<dbReference type="InterPro" id="IPR005112">
    <property type="entry name" value="dDENN_dom"/>
</dbReference>
<dbReference type="InterPro" id="IPR043153">
    <property type="entry name" value="DENN_C"/>
</dbReference>
<dbReference type="InterPro" id="IPR051696">
    <property type="entry name" value="DENN_Domain_GEFs"/>
</dbReference>
<dbReference type="InterPro" id="IPR002219">
    <property type="entry name" value="PE/DAG-bd"/>
</dbReference>
<dbReference type="InterPro" id="IPR037516">
    <property type="entry name" value="Tripartite_DENN"/>
</dbReference>
<dbReference type="InterPro" id="IPR005113">
    <property type="entry name" value="uDENN_dom"/>
</dbReference>
<dbReference type="PANTHER" id="PTHR12296:SF21">
    <property type="entry name" value="DENN DOMAIN-CONTAINING PROTEIN 3"/>
    <property type="match status" value="1"/>
</dbReference>
<dbReference type="PANTHER" id="PTHR12296">
    <property type="entry name" value="DENN DOMAIN-CONTAINING PROTEIN 4"/>
    <property type="match status" value="1"/>
</dbReference>
<dbReference type="Pfam" id="PF03455">
    <property type="entry name" value="dDENN"/>
    <property type="match status" value="1"/>
</dbReference>
<dbReference type="Pfam" id="PF02141">
    <property type="entry name" value="DENN"/>
    <property type="match status" value="1"/>
</dbReference>
<dbReference type="Pfam" id="PF03456">
    <property type="entry name" value="uDENN"/>
    <property type="match status" value="1"/>
</dbReference>
<dbReference type="SMART" id="SM00801">
    <property type="entry name" value="dDENN"/>
    <property type="match status" value="1"/>
</dbReference>
<dbReference type="SMART" id="SM00799">
    <property type="entry name" value="DENN"/>
    <property type="match status" value="1"/>
</dbReference>
<dbReference type="SMART" id="SM00800">
    <property type="entry name" value="uDENN"/>
    <property type="match status" value="1"/>
</dbReference>
<dbReference type="SUPFAM" id="SSF57889">
    <property type="entry name" value="Cysteine-rich domain"/>
    <property type="match status" value="1"/>
</dbReference>
<dbReference type="PROSITE" id="PS50211">
    <property type="entry name" value="DENN"/>
    <property type="match status" value="1"/>
</dbReference>
<dbReference type="PROSITE" id="PS50081">
    <property type="entry name" value="ZF_DAG_PE_2"/>
    <property type="match status" value="1"/>
</dbReference>
<name>EPD1_VERDV</name>
<protein>
    <recommendedName>
        <fullName evidence="5">Elicitor of plant defense protein 1</fullName>
        <shortName evidence="5">VdEPD1</shortName>
    </recommendedName>
</protein>
<organism>
    <name type="scientific">Verticillium dahliae (strain VdLs.17 / ATCC MYA-4575 / FGSC 10137)</name>
    <name type="common">Verticillium wilt</name>
    <dbReference type="NCBI Taxonomy" id="498257"/>
    <lineage>
        <taxon>Eukaryota</taxon>
        <taxon>Fungi</taxon>
        <taxon>Dikarya</taxon>
        <taxon>Ascomycota</taxon>
        <taxon>Pezizomycotina</taxon>
        <taxon>Sordariomycetes</taxon>
        <taxon>Hypocreomycetidae</taxon>
        <taxon>Glomerellales</taxon>
        <taxon>Plectosphaerellaceae</taxon>
        <taxon>Verticillium</taxon>
    </lineage>
</organism>
<accession>G2WWH6</accession>
<reference key="1">
    <citation type="journal article" date="2011" name="PLoS Pathog.">
        <title>Comparative genomics yields insights into niche adaptation of plant vascular wilt pathogens.</title>
        <authorList>
            <person name="Klosterman S.J."/>
            <person name="Subbarao K.V."/>
            <person name="Kang S."/>
            <person name="Veronese P."/>
            <person name="Gold S.E."/>
            <person name="Thomma B.P.H.J."/>
            <person name="Chen Z."/>
            <person name="Henrissat B."/>
            <person name="Lee Y.-H."/>
            <person name="Park J."/>
            <person name="Garcia-Pedrajas M.D."/>
            <person name="Barbara D.J."/>
            <person name="Anchieta A."/>
            <person name="de Jonge R."/>
            <person name="Santhanam P."/>
            <person name="Maruthachalam K."/>
            <person name="Atallah Z."/>
            <person name="Amyotte S.G."/>
            <person name="Paz Z."/>
            <person name="Inderbitzin P."/>
            <person name="Hayes R.J."/>
            <person name="Heiman D.I."/>
            <person name="Young S."/>
            <person name="Zeng Q."/>
            <person name="Engels R."/>
            <person name="Galagan J."/>
            <person name="Cuomo C.A."/>
            <person name="Dobinson K.F."/>
            <person name="Ma L.-J."/>
        </authorList>
    </citation>
    <scope>NUCLEOTIDE SEQUENCE [LARGE SCALE GENOMIC DNA]</scope>
    <source>
        <strain>VdLs.17 / ATCC MYA-4575 / FGSC 10137</strain>
    </source>
</reference>
<reference key="2">
    <citation type="journal article" date="2025" name="Adv. Sci.">
        <title>Recognition of a fungal effector potentiates pathogen-associated molecular pattern-triggered immunity in cotton.</title>
        <authorList>
            <person name="Sun L."/>
            <person name="Li X."/>
            <person name="Zhong J."/>
            <person name="Wang Y."/>
            <person name="Li B."/>
            <person name="Ye Z."/>
            <person name="Zhang J."/>
        </authorList>
    </citation>
    <scope>FUNCTION</scope>
    <scope>DISRUPTION PHENOTYPE</scope>
    <scope>SUBCELLULAR LOCATION</scope>
    <scope>INTERACTION WITH HOST EIR; EIR5A AND EIR5D</scope>
</reference>
<comment type="function">
    <text evidence="4">Acts as an elicitor that triggers defense responses in both Nicotiana benthamiana and cotton plants (PubMed:39488762). Triggers the accumulation of reactive oxygen species (ROS) and the activation of cell death in cotton plants (PubMed:39488762). Induces significantly enhanced resistance of Nicotiana benthamiana to both the broad-host-range filamentous pathogen Botrytis cinerea and the semibiotrophic pathogen Phytophthora capsici (PubMed:39488762). Stimulates the expression of EIR5A (AC A0A5J5T2N2) and EIR5D (AC A0A5J5NT52) in cotton plants and recognition of EPD1 potentiates EIRs to enhance cotton PAMP-triggered immunity (PTI) (PubMed:39488762).</text>
</comment>
<comment type="subunit">
    <text evidence="4">Interacts with host cotton EIR5A (AC A0A5J5T2N2) and EIR5D (AC A0A5J5NT52) and host N.benthamiana EIR (AC P0DXJ0).</text>
</comment>
<comment type="subcellular location">
    <subcellularLocation>
        <location evidence="4">Secreted</location>
    </subcellularLocation>
    <subcellularLocation>
        <location evidence="4">Host cell</location>
    </subcellularLocation>
</comment>
<comment type="disruption phenotype">
    <text evidence="4">Enhances V.dahliae virulence in plants.</text>
</comment>
<comment type="similarity">
    <text evidence="6">Belongs to the EPD1 elicitor family.</text>
</comment>
<gene>
    <name evidence="5" type="primary">EPD1</name>
    <name type="ORF">VDAG_01962</name>
</gene>